<keyword id="KW-0687">Ribonucleoprotein</keyword>
<keyword id="KW-0689">Ribosomal protein</keyword>
<dbReference type="EMBL" id="CP000463">
    <property type="protein sequence ID" value="ABJ04090.1"/>
    <property type="molecule type" value="Genomic_DNA"/>
</dbReference>
<dbReference type="SMR" id="Q07VE4"/>
<dbReference type="STRING" id="316055.RPE_0129"/>
<dbReference type="KEGG" id="rpe:RPE_0129"/>
<dbReference type="eggNOG" id="COG0227">
    <property type="taxonomic scope" value="Bacteria"/>
</dbReference>
<dbReference type="HOGENOM" id="CLU_064548_4_2_5"/>
<dbReference type="OrthoDB" id="9805609at2"/>
<dbReference type="GO" id="GO:0022625">
    <property type="term" value="C:cytosolic large ribosomal subunit"/>
    <property type="evidence" value="ECO:0007669"/>
    <property type="project" value="TreeGrafter"/>
</dbReference>
<dbReference type="GO" id="GO:0003735">
    <property type="term" value="F:structural constituent of ribosome"/>
    <property type="evidence" value="ECO:0007669"/>
    <property type="project" value="InterPro"/>
</dbReference>
<dbReference type="GO" id="GO:0006412">
    <property type="term" value="P:translation"/>
    <property type="evidence" value="ECO:0007669"/>
    <property type="project" value="UniProtKB-UniRule"/>
</dbReference>
<dbReference type="Gene3D" id="2.30.170.40">
    <property type="entry name" value="Ribosomal protein L28/L24"/>
    <property type="match status" value="1"/>
</dbReference>
<dbReference type="HAMAP" id="MF_00373">
    <property type="entry name" value="Ribosomal_bL28"/>
    <property type="match status" value="1"/>
</dbReference>
<dbReference type="InterPro" id="IPR026569">
    <property type="entry name" value="Ribosomal_bL28"/>
</dbReference>
<dbReference type="InterPro" id="IPR034704">
    <property type="entry name" value="Ribosomal_bL28/bL31-like_sf"/>
</dbReference>
<dbReference type="InterPro" id="IPR001383">
    <property type="entry name" value="Ribosomal_bL28_bact-type"/>
</dbReference>
<dbReference type="InterPro" id="IPR037147">
    <property type="entry name" value="Ribosomal_bL28_sf"/>
</dbReference>
<dbReference type="NCBIfam" id="TIGR00009">
    <property type="entry name" value="L28"/>
    <property type="match status" value="1"/>
</dbReference>
<dbReference type="PANTHER" id="PTHR13528">
    <property type="entry name" value="39S RIBOSOMAL PROTEIN L28, MITOCHONDRIAL"/>
    <property type="match status" value="1"/>
</dbReference>
<dbReference type="PANTHER" id="PTHR13528:SF2">
    <property type="entry name" value="LARGE RIBOSOMAL SUBUNIT PROTEIN BL28M"/>
    <property type="match status" value="1"/>
</dbReference>
<dbReference type="Pfam" id="PF00830">
    <property type="entry name" value="Ribosomal_L28"/>
    <property type="match status" value="1"/>
</dbReference>
<dbReference type="SUPFAM" id="SSF143800">
    <property type="entry name" value="L28p-like"/>
    <property type="match status" value="1"/>
</dbReference>
<evidence type="ECO:0000255" key="1">
    <source>
        <dbReference type="HAMAP-Rule" id="MF_00373"/>
    </source>
</evidence>
<evidence type="ECO:0000305" key="2"/>
<name>RL28_RHOP5</name>
<accession>Q07VE4</accession>
<sequence>MSRRCELTAKGAQVGHKVSHSNIKTKRRFLPNLVNITFISDALGRQVRLRVSTNALKSVDHRGGLDGFLLKAKDAELSPKAVDIKRQIEKKKLTAELAAQA</sequence>
<proteinExistence type="inferred from homology"/>
<feature type="chain" id="PRO_1000007329" description="Large ribosomal subunit protein bL28">
    <location>
        <begin position="1"/>
        <end position="101"/>
    </location>
</feature>
<gene>
    <name evidence="1" type="primary">rpmB</name>
    <name type="ordered locus">RPE_0129</name>
</gene>
<protein>
    <recommendedName>
        <fullName evidence="1">Large ribosomal subunit protein bL28</fullName>
    </recommendedName>
    <alternativeName>
        <fullName evidence="2">50S ribosomal protein L28</fullName>
    </alternativeName>
</protein>
<comment type="similarity">
    <text evidence="1">Belongs to the bacterial ribosomal protein bL28 family.</text>
</comment>
<reference key="1">
    <citation type="submission" date="2006-09" db="EMBL/GenBank/DDBJ databases">
        <title>Complete sequence of Rhodopseudomonas palustris BisA53.</title>
        <authorList>
            <consortium name="US DOE Joint Genome Institute"/>
            <person name="Copeland A."/>
            <person name="Lucas S."/>
            <person name="Lapidus A."/>
            <person name="Barry K."/>
            <person name="Detter J.C."/>
            <person name="Glavina del Rio T."/>
            <person name="Hammon N."/>
            <person name="Israni S."/>
            <person name="Dalin E."/>
            <person name="Tice H."/>
            <person name="Pitluck S."/>
            <person name="Chain P."/>
            <person name="Malfatti S."/>
            <person name="Shin M."/>
            <person name="Vergez L."/>
            <person name="Schmutz J."/>
            <person name="Larimer F."/>
            <person name="Land M."/>
            <person name="Hauser L."/>
            <person name="Pelletier D.A."/>
            <person name="Kyrpides N."/>
            <person name="Kim E."/>
            <person name="Harwood C.S."/>
            <person name="Oda Y."/>
            <person name="Richardson P."/>
        </authorList>
    </citation>
    <scope>NUCLEOTIDE SEQUENCE [LARGE SCALE GENOMIC DNA]</scope>
    <source>
        <strain>BisA53</strain>
    </source>
</reference>
<organism>
    <name type="scientific">Rhodopseudomonas palustris (strain BisA53)</name>
    <dbReference type="NCBI Taxonomy" id="316055"/>
    <lineage>
        <taxon>Bacteria</taxon>
        <taxon>Pseudomonadati</taxon>
        <taxon>Pseudomonadota</taxon>
        <taxon>Alphaproteobacteria</taxon>
        <taxon>Hyphomicrobiales</taxon>
        <taxon>Nitrobacteraceae</taxon>
        <taxon>Rhodopseudomonas</taxon>
    </lineage>
</organism>